<accession>P0C7Z6</accession>
<protein>
    <recommendedName>
        <fullName>Phenol-soluble modulin alpha 2 peptide</fullName>
    </recommendedName>
</protein>
<gene>
    <name type="primary">psmA2</name>
    <name type="ordered locus">SACOL0493.3</name>
</gene>
<evidence type="ECO:0000250" key="1">
    <source>
        <dbReference type="UniProtKB" id="A9JX06"/>
    </source>
</evidence>
<evidence type="ECO:0000305" key="2"/>
<keyword id="KW-0204">Cytolysis</keyword>
<keyword id="KW-0843">Virulence</keyword>
<dbReference type="EMBL" id="CP000046">
    <property type="status" value="NOT_ANNOTATED_CDS"/>
    <property type="molecule type" value="Genomic_DNA"/>
</dbReference>
<dbReference type="Proteomes" id="UP000000530">
    <property type="component" value="Chromosome"/>
</dbReference>
<dbReference type="GO" id="GO:0031640">
    <property type="term" value="P:killing of cells of another organism"/>
    <property type="evidence" value="ECO:0007669"/>
    <property type="project" value="UniProtKB-KW"/>
</dbReference>
<dbReference type="InterPro" id="IPR031429">
    <property type="entry name" value="PSM_alpha"/>
</dbReference>
<dbReference type="NCBIfam" id="NF033425">
    <property type="entry name" value="PSM_alpha_1_2"/>
    <property type="match status" value="1"/>
</dbReference>
<dbReference type="Pfam" id="PF17063">
    <property type="entry name" value="PSMalpha"/>
    <property type="match status" value="1"/>
</dbReference>
<name>PSMA2_STAAC</name>
<feature type="peptide" id="PRO_0000345049" description="Phenol-soluble modulin alpha 2 peptide">
    <location>
        <begin position="1"/>
        <end position="21"/>
    </location>
</feature>
<comment type="function">
    <text evidence="1">Peptide which can recruit, activate and subsequently lyse human neutrophils, thus eliminating the main cellular defense against infection.</text>
</comment>
<comment type="similarity">
    <text evidence="2">Belongs to the phenol-soluble modulin alpha peptides family.</text>
</comment>
<reference key="1">
    <citation type="journal article" date="2005" name="J. Bacteriol.">
        <title>Insights on evolution of virulence and resistance from the complete genome analysis of an early methicillin-resistant Staphylococcus aureus strain and a biofilm-producing methicillin-resistant Staphylococcus epidermidis strain.</title>
        <authorList>
            <person name="Gill S.R."/>
            <person name="Fouts D.E."/>
            <person name="Archer G.L."/>
            <person name="Mongodin E.F."/>
            <person name="DeBoy R.T."/>
            <person name="Ravel J."/>
            <person name="Paulsen I.T."/>
            <person name="Kolonay J.F."/>
            <person name="Brinkac L.M."/>
            <person name="Beanan M.J."/>
            <person name="Dodson R.J."/>
            <person name="Daugherty S.C."/>
            <person name="Madupu R."/>
            <person name="Angiuoli S.V."/>
            <person name="Durkin A.S."/>
            <person name="Haft D.H."/>
            <person name="Vamathevan J.J."/>
            <person name="Khouri H."/>
            <person name="Utterback T.R."/>
            <person name="Lee C."/>
            <person name="Dimitrov G."/>
            <person name="Jiang L."/>
            <person name="Qin H."/>
            <person name="Weidman J."/>
            <person name="Tran K."/>
            <person name="Kang K.H."/>
            <person name="Hance I.R."/>
            <person name="Nelson K.E."/>
            <person name="Fraser C.M."/>
        </authorList>
    </citation>
    <scope>NUCLEOTIDE SEQUENCE [LARGE SCALE GENOMIC DNA]</scope>
    <source>
        <strain>COL</strain>
    </source>
</reference>
<sequence>MGIIAGIIKFIKGLIEKFTGK</sequence>
<proteinExistence type="inferred from homology"/>
<organism>
    <name type="scientific">Staphylococcus aureus (strain COL)</name>
    <dbReference type="NCBI Taxonomy" id="93062"/>
    <lineage>
        <taxon>Bacteria</taxon>
        <taxon>Bacillati</taxon>
        <taxon>Bacillota</taxon>
        <taxon>Bacilli</taxon>
        <taxon>Bacillales</taxon>
        <taxon>Staphylococcaceae</taxon>
        <taxon>Staphylococcus</taxon>
    </lineage>
</organism>